<proteinExistence type="inferred from homology"/>
<name>NDHO_ACAM1</name>
<evidence type="ECO:0000255" key="1">
    <source>
        <dbReference type="HAMAP-Rule" id="MF_01354"/>
    </source>
</evidence>
<evidence type="ECO:0000305" key="2"/>
<keyword id="KW-0472">Membrane</keyword>
<keyword id="KW-0520">NAD</keyword>
<keyword id="KW-0521">NADP</keyword>
<keyword id="KW-0618">Plastoquinone</keyword>
<keyword id="KW-0874">Quinone</keyword>
<keyword id="KW-1185">Reference proteome</keyword>
<keyword id="KW-0793">Thylakoid</keyword>
<keyword id="KW-1278">Translocase</keyword>
<keyword id="KW-0813">Transport</keyword>
<gene>
    <name evidence="1" type="primary">ndhO</name>
    <name type="ordered locus">AM1_2137</name>
</gene>
<dbReference type="EC" id="7.1.1.-" evidence="1"/>
<dbReference type="EMBL" id="CP000828">
    <property type="protein sequence ID" value="ABW27152.1"/>
    <property type="status" value="ALT_INIT"/>
    <property type="molecule type" value="Genomic_DNA"/>
</dbReference>
<dbReference type="RefSeq" id="WP_041660842.1">
    <property type="nucleotide sequence ID" value="NC_009925.1"/>
</dbReference>
<dbReference type="SMR" id="B0BZU2"/>
<dbReference type="STRING" id="329726.AM1_2137"/>
<dbReference type="KEGG" id="amr:AM1_2137"/>
<dbReference type="eggNOG" id="ENOG5032XZT">
    <property type="taxonomic scope" value="Bacteria"/>
</dbReference>
<dbReference type="HOGENOM" id="CLU_195299_0_0_3"/>
<dbReference type="OrthoDB" id="426633at2"/>
<dbReference type="Proteomes" id="UP000000268">
    <property type="component" value="Chromosome"/>
</dbReference>
<dbReference type="GO" id="GO:0031676">
    <property type="term" value="C:plasma membrane-derived thylakoid membrane"/>
    <property type="evidence" value="ECO:0007669"/>
    <property type="project" value="UniProtKB-SubCell"/>
</dbReference>
<dbReference type="GO" id="GO:0016655">
    <property type="term" value="F:oxidoreductase activity, acting on NAD(P)H, quinone or similar compound as acceptor"/>
    <property type="evidence" value="ECO:0007669"/>
    <property type="project" value="UniProtKB-UniRule"/>
</dbReference>
<dbReference type="GO" id="GO:0048038">
    <property type="term" value="F:quinone binding"/>
    <property type="evidence" value="ECO:0007669"/>
    <property type="project" value="UniProtKB-KW"/>
</dbReference>
<dbReference type="HAMAP" id="MF_01354">
    <property type="entry name" value="NDH1_NDH1O"/>
    <property type="match status" value="1"/>
</dbReference>
<dbReference type="InterPro" id="IPR020905">
    <property type="entry name" value="NdhO"/>
</dbReference>
<dbReference type="Pfam" id="PF11910">
    <property type="entry name" value="NdhO"/>
    <property type="match status" value="1"/>
</dbReference>
<accession>B0BZU2</accession>
<comment type="function">
    <text evidence="1">NDH-1 shuttles electrons from an unknown electron donor, via FMN and iron-sulfur (Fe-S) centers, to quinones in the respiratory and/or the photosynthetic chain. The immediate electron acceptor for the enzyme in this species is believed to be plastoquinone. Couples the redox reaction to proton translocation, and thus conserves the redox energy in a proton gradient. Cyanobacterial NDH-1 also plays a role in inorganic carbon-concentration.</text>
</comment>
<comment type="catalytic activity">
    <reaction evidence="1">
        <text>a plastoquinone + NADH + (n+1) H(+)(in) = a plastoquinol + NAD(+) + n H(+)(out)</text>
        <dbReference type="Rhea" id="RHEA:42608"/>
        <dbReference type="Rhea" id="RHEA-COMP:9561"/>
        <dbReference type="Rhea" id="RHEA-COMP:9562"/>
        <dbReference type="ChEBI" id="CHEBI:15378"/>
        <dbReference type="ChEBI" id="CHEBI:17757"/>
        <dbReference type="ChEBI" id="CHEBI:57540"/>
        <dbReference type="ChEBI" id="CHEBI:57945"/>
        <dbReference type="ChEBI" id="CHEBI:62192"/>
    </reaction>
</comment>
<comment type="catalytic activity">
    <reaction evidence="1">
        <text>a plastoquinone + NADPH + (n+1) H(+)(in) = a plastoquinol + NADP(+) + n H(+)(out)</text>
        <dbReference type="Rhea" id="RHEA:42612"/>
        <dbReference type="Rhea" id="RHEA-COMP:9561"/>
        <dbReference type="Rhea" id="RHEA-COMP:9562"/>
        <dbReference type="ChEBI" id="CHEBI:15378"/>
        <dbReference type="ChEBI" id="CHEBI:17757"/>
        <dbReference type="ChEBI" id="CHEBI:57783"/>
        <dbReference type="ChEBI" id="CHEBI:58349"/>
        <dbReference type="ChEBI" id="CHEBI:62192"/>
    </reaction>
</comment>
<comment type="subunit">
    <text evidence="1">NDH-1 can be composed of about 15 different subunits; different subcomplexes with different compositions have been identified which probably have different functions.</text>
</comment>
<comment type="subcellular location">
    <subcellularLocation>
        <location evidence="1">Cellular thylakoid membrane</location>
        <topology evidence="1">Peripheral membrane protein</topology>
        <orientation evidence="1">Cytoplasmic side</orientation>
    </subcellularLocation>
</comment>
<comment type="similarity">
    <text evidence="1">Belongs to the complex I NdhO subunit family.</text>
</comment>
<comment type="sequence caution" evidence="2">
    <conflict type="erroneous initiation">
        <sequence resource="EMBL-CDS" id="ABW27152"/>
    </conflict>
</comment>
<reference key="1">
    <citation type="journal article" date="2008" name="Proc. Natl. Acad. Sci. U.S.A.">
        <title>Niche adaptation and genome expansion in the chlorophyll d-producing cyanobacterium Acaryochloris marina.</title>
        <authorList>
            <person name="Swingley W.D."/>
            <person name="Chen M."/>
            <person name="Cheung P.C."/>
            <person name="Conrad A.L."/>
            <person name="Dejesa L.C."/>
            <person name="Hao J."/>
            <person name="Honchak B.M."/>
            <person name="Karbach L.E."/>
            <person name="Kurdoglu A."/>
            <person name="Lahiri S."/>
            <person name="Mastrian S.D."/>
            <person name="Miyashita H."/>
            <person name="Page L."/>
            <person name="Ramakrishna P."/>
            <person name="Satoh S."/>
            <person name="Sattley W.M."/>
            <person name="Shimada Y."/>
            <person name="Taylor H.L."/>
            <person name="Tomo T."/>
            <person name="Tsuchiya T."/>
            <person name="Wang Z.T."/>
            <person name="Raymond J."/>
            <person name="Mimuro M."/>
            <person name="Blankenship R.E."/>
            <person name="Touchman J.W."/>
        </authorList>
    </citation>
    <scope>NUCLEOTIDE SEQUENCE [LARGE SCALE GENOMIC DNA]</scope>
    <source>
        <strain>MBIC 11017</strain>
    </source>
</reference>
<sequence length="69" mass="7773">MAVKKGSLVRIVPEKFENSVEAKASDRRLPPYVFEGTGEVLEIKGDYAQIQFRVPVPTVWLRVDQLEAA</sequence>
<organism>
    <name type="scientific">Acaryochloris marina (strain MBIC 11017)</name>
    <dbReference type="NCBI Taxonomy" id="329726"/>
    <lineage>
        <taxon>Bacteria</taxon>
        <taxon>Bacillati</taxon>
        <taxon>Cyanobacteriota</taxon>
        <taxon>Cyanophyceae</taxon>
        <taxon>Acaryochloridales</taxon>
        <taxon>Acaryochloridaceae</taxon>
        <taxon>Acaryochloris</taxon>
    </lineage>
</organism>
<protein>
    <recommendedName>
        <fullName evidence="1">NAD(P)H-quinone oxidoreductase subunit O</fullName>
        <ecNumber evidence="1">7.1.1.-</ecNumber>
    </recommendedName>
    <alternativeName>
        <fullName evidence="1">NAD(P)H dehydrogenase I subunit O</fullName>
    </alternativeName>
    <alternativeName>
        <fullName>NDH-1 subunit O</fullName>
    </alternativeName>
    <alternativeName>
        <fullName>NDH-O</fullName>
    </alternativeName>
</protein>
<feature type="chain" id="PRO_0000353631" description="NAD(P)H-quinone oxidoreductase subunit O">
    <location>
        <begin position="1"/>
        <end position="69"/>
    </location>
</feature>